<evidence type="ECO:0000255" key="1">
    <source>
        <dbReference type="HAMAP-Rule" id="MF_01350"/>
    </source>
</evidence>
<evidence type="ECO:0000256" key="2">
    <source>
        <dbReference type="SAM" id="MobiDB-lite"/>
    </source>
</evidence>
<organism>
    <name type="scientific">Rhodococcus jostii (strain RHA1)</name>
    <dbReference type="NCBI Taxonomy" id="101510"/>
    <lineage>
        <taxon>Bacteria</taxon>
        <taxon>Bacillati</taxon>
        <taxon>Actinomycetota</taxon>
        <taxon>Actinomycetes</taxon>
        <taxon>Mycobacteriales</taxon>
        <taxon>Nocardiaceae</taxon>
        <taxon>Rhodococcus</taxon>
    </lineage>
</organism>
<proteinExistence type="inferred from homology"/>
<dbReference type="EC" id="7.1.1.-" evidence="1"/>
<dbReference type="EMBL" id="CP000431">
    <property type="protein sequence ID" value="ABG97693.1"/>
    <property type="molecule type" value="Genomic_DNA"/>
</dbReference>
<dbReference type="RefSeq" id="WP_009479167.1">
    <property type="nucleotide sequence ID" value="NC_008268.1"/>
</dbReference>
<dbReference type="SMR" id="Q0S443"/>
<dbReference type="KEGG" id="rha:RHA1_ro05916"/>
<dbReference type="eggNOG" id="COG1005">
    <property type="taxonomic scope" value="Bacteria"/>
</dbReference>
<dbReference type="HOGENOM" id="CLU_015134_0_0_11"/>
<dbReference type="OrthoDB" id="9803734at2"/>
<dbReference type="Proteomes" id="UP000008710">
    <property type="component" value="Chromosome"/>
</dbReference>
<dbReference type="GO" id="GO:0005886">
    <property type="term" value="C:plasma membrane"/>
    <property type="evidence" value="ECO:0007669"/>
    <property type="project" value="UniProtKB-SubCell"/>
</dbReference>
<dbReference type="GO" id="GO:0003954">
    <property type="term" value="F:NADH dehydrogenase activity"/>
    <property type="evidence" value="ECO:0007669"/>
    <property type="project" value="TreeGrafter"/>
</dbReference>
<dbReference type="GO" id="GO:0016655">
    <property type="term" value="F:oxidoreductase activity, acting on NAD(P)H, quinone or similar compound as acceptor"/>
    <property type="evidence" value="ECO:0007669"/>
    <property type="project" value="UniProtKB-UniRule"/>
</dbReference>
<dbReference type="GO" id="GO:0048038">
    <property type="term" value="F:quinone binding"/>
    <property type="evidence" value="ECO:0007669"/>
    <property type="project" value="UniProtKB-KW"/>
</dbReference>
<dbReference type="GO" id="GO:0009060">
    <property type="term" value="P:aerobic respiration"/>
    <property type="evidence" value="ECO:0007669"/>
    <property type="project" value="TreeGrafter"/>
</dbReference>
<dbReference type="HAMAP" id="MF_01350">
    <property type="entry name" value="NDH1_NuoH"/>
    <property type="match status" value="1"/>
</dbReference>
<dbReference type="InterPro" id="IPR001694">
    <property type="entry name" value="NADH_UbQ_OxRdtase_su1/FPO"/>
</dbReference>
<dbReference type="InterPro" id="IPR018086">
    <property type="entry name" value="NADH_UbQ_OxRdtase_su1_CS"/>
</dbReference>
<dbReference type="NCBIfam" id="NF004741">
    <property type="entry name" value="PRK06076.1-2"/>
    <property type="match status" value="1"/>
</dbReference>
<dbReference type="NCBIfam" id="NF004743">
    <property type="entry name" value="PRK06076.1-4"/>
    <property type="match status" value="1"/>
</dbReference>
<dbReference type="PANTHER" id="PTHR11432">
    <property type="entry name" value="NADH DEHYDROGENASE SUBUNIT 1"/>
    <property type="match status" value="1"/>
</dbReference>
<dbReference type="PANTHER" id="PTHR11432:SF3">
    <property type="entry name" value="NADH-UBIQUINONE OXIDOREDUCTASE CHAIN 1"/>
    <property type="match status" value="1"/>
</dbReference>
<dbReference type="Pfam" id="PF00146">
    <property type="entry name" value="NADHdh"/>
    <property type="match status" value="1"/>
</dbReference>
<dbReference type="PROSITE" id="PS00667">
    <property type="entry name" value="COMPLEX1_ND1_1"/>
    <property type="match status" value="1"/>
</dbReference>
<dbReference type="PROSITE" id="PS00668">
    <property type="entry name" value="COMPLEX1_ND1_2"/>
    <property type="match status" value="1"/>
</dbReference>
<reference key="1">
    <citation type="journal article" date="2006" name="Proc. Natl. Acad. Sci. U.S.A.">
        <title>The complete genome of Rhodococcus sp. RHA1 provides insights into a catabolic powerhouse.</title>
        <authorList>
            <person name="McLeod M.P."/>
            <person name="Warren R.L."/>
            <person name="Hsiao W.W.L."/>
            <person name="Araki N."/>
            <person name="Myhre M."/>
            <person name="Fernandes C."/>
            <person name="Miyazawa D."/>
            <person name="Wong W."/>
            <person name="Lillquist A.L."/>
            <person name="Wang D."/>
            <person name="Dosanjh M."/>
            <person name="Hara H."/>
            <person name="Petrescu A."/>
            <person name="Morin R.D."/>
            <person name="Yang G."/>
            <person name="Stott J.M."/>
            <person name="Schein J.E."/>
            <person name="Shin H."/>
            <person name="Smailus D."/>
            <person name="Siddiqui A.S."/>
            <person name="Marra M.A."/>
            <person name="Jones S.J.M."/>
            <person name="Holt R."/>
            <person name="Brinkman F.S.L."/>
            <person name="Miyauchi K."/>
            <person name="Fukuda M."/>
            <person name="Davies J.E."/>
            <person name="Mohn W.W."/>
            <person name="Eltis L.D."/>
        </authorList>
    </citation>
    <scope>NUCLEOTIDE SEQUENCE [LARGE SCALE GENOMIC DNA]</scope>
    <source>
        <strain>RHA1</strain>
    </source>
</reference>
<sequence>MTIEGVYPDPALFGHDPWWLVLGKALAIFVFLVLTPLLTILAERKVMAWMQMRVGPNRVGPRGMLQSLADGIKLALKEGIVPKGVDKPIYILAPVIAAVPAFMAFAVIPFGPAVSIFGHYTPLQLTDLPVAVLYVLAATSIGVYGIVLAGWASGSTYPLLGGLRSTAQVISYEIAMALSFAAVFLDAGTMSTSGIVAAQEHTWYVFLLLPSFLIYVTSMVGETNRAPFDLPEAEGELVGGFHTEYSSLSFAMFMLAEYVNMVTVSALATTLFLGGWHAPFPLSLWDGANSGWWPVLWFTLKVWGFLFVFVWLRATLPRLRYDQFMGLGWKILIPISLVWVMIVATVRAFRNEGYDARSIALVVAGLVVALVVVVLLWKRLRPGRVPAPEKPVEPRGRAELSPETLEPFDPMAGGYPVPPMPGQTLPAFRRTPVSVTGAHSTGPTQENSDD</sequence>
<name>NUOH_RHOJR</name>
<protein>
    <recommendedName>
        <fullName evidence="1">NADH-quinone oxidoreductase subunit H</fullName>
        <ecNumber evidence="1">7.1.1.-</ecNumber>
    </recommendedName>
    <alternativeName>
        <fullName evidence="1">NADH dehydrogenase I subunit H</fullName>
    </alternativeName>
    <alternativeName>
        <fullName evidence="1">NDH-1 subunit H</fullName>
    </alternativeName>
</protein>
<gene>
    <name evidence="1" type="primary">nuoH</name>
    <name type="ordered locus">RHA1_ro05916</name>
</gene>
<feature type="chain" id="PRO_0000298846" description="NADH-quinone oxidoreductase subunit H">
    <location>
        <begin position="1"/>
        <end position="450"/>
    </location>
</feature>
<feature type="transmembrane region" description="Helical" evidence="1">
    <location>
        <begin position="18"/>
        <end position="38"/>
    </location>
</feature>
<feature type="transmembrane region" description="Helical" evidence="1">
    <location>
        <begin position="91"/>
        <end position="111"/>
    </location>
</feature>
<feature type="transmembrane region" description="Helical" evidence="1">
    <location>
        <begin position="128"/>
        <end position="148"/>
    </location>
</feature>
<feature type="transmembrane region" description="Helical" evidence="1">
    <location>
        <begin position="169"/>
        <end position="189"/>
    </location>
</feature>
<feature type="transmembrane region" description="Helical" evidence="1">
    <location>
        <begin position="201"/>
        <end position="221"/>
    </location>
</feature>
<feature type="transmembrane region" description="Helical" evidence="1">
    <location>
        <begin position="262"/>
        <end position="282"/>
    </location>
</feature>
<feature type="transmembrane region" description="Helical" evidence="1">
    <location>
        <begin position="292"/>
        <end position="312"/>
    </location>
</feature>
<feature type="transmembrane region" description="Helical" evidence="1">
    <location>
        <begin position="324"/>
        <end position="344"/>
    </location>
</feature>
<feature type="transmembrane region" description="Helical" evidence="1">
    <location>
        <begin position="358"/>
        <end position="378"/>
    </location>
</feature>
<feature type="region of interest" description="Disordered" evidence="2">
    <location>
        <begin position="387"/>
        <end position="450"/>
    </location>
</feature>
<feature type="compositionally biased region" description="Basic and acidic residues" evidence="2">
    <location>
        <begin position="390"/>
        <end position="400"/>
    </location>
</feature>
<feature type="compositionally biased region" description="Polar residues" evidence="2">
    <location>
        <begin position="433"/>
        <end position="450"/>
    </location>
</feature>
<accession>Q0S443</accession>
<comment type="function">
    <text evidence="1">NDH-1 shuttles electrons from NADH, via FMN and iron-sulfur (Fe-S) centers, to quinones in the respiratory chain. The immediate electron acceptor for the enzyme in this species is believed to be ubiquinone. Couples the redox reaction to proton translocation (for every two electrons transferred, four hydrogen ions are translocated across the cytoplasmic membrane), and thus conserves the redox energy in a proton gradient. This subunit may bind ubiquinone.</text>
</comment>
<comment type="catalytic activity">
    <reaction evidence="1">
        <text>a quinone + NADH + 5 H(+)(in) = a quinol + NAD(+) + 4 H(+)(out)</text>
        <dbReference type="Rhea" id="RHEA:57888"/>
        <dbReference type="ChEBI" id="CHEBI:15378"/>
        <dbReference type="ChEBI" id="CHEBI:24646"/>
        <dbReference type="ChEBI" id="CHEBI:57540"/>
        <dbReference type="ChEBI" id="CHEBI:57945"/>
        <dbReference type="ChEBI" id="CHEBI:132124"/>
    </reaction>
</comment>
<comment type="subunit">
    <text evidence="1">NDH-1 is composed of 14 different subunits. Subunits NuoA, H, J, K, L, M, N constitute the membrane sector of the complex.</text>
</comment>
<comment type="subcellular location">
    <subcellularLocation>
        <location evidence="1">Cell membrane</location>
        <topology evidence="1">Multi-pass membrane protein</topology>
    </subcellularLocation>
</comment>
<comment type="similarity">
    <text evidence="1">Belongs to the complex I subunit 1 family.</text>
</comment>
<keyword id="KW-1003">Cell membrane</keyword>
<keyword id="KW-0472">Membrane</keyword>
<keyword id="KW-0520">NAD</keyword>
<keyword id="KW-0874">Quinone</keyword>
<keyword id="KW-1278">Translocase</keyword>
<keyword id="KW-0812">Transmembrane</keyword>
<keyword id="KW-1133">Transmembrane helix</keyword>
<keyword id="KW-0830">Ubiquinone</keyword>